<reference key="1">
    <citation type="journal article" date="2010" name="PLoS ONE">
        <title>The complete genome sequence of Cupriavidus metallidurans strain CH34, a master survivalist in harsh and anthropogenic environments.</title>
        <authorList>
            <person name="Janssen P.J."/>
            <person name="Van Houdt R."/>
            <person name="Moors H."/>
            <person name="Monsieurs P."/>
            <person name="Morin N."/>
            <person name="Michaux A."/>
            <person name="Benotmane M.A."/>
            <person name="Leys N."/>
            <person name="Vallaeys T."/>
            <person name="Lapidus A."/>
            <person name="Monchy S."/>
            <person name="Medigue C."/>
            <person name="Taghavi S."/>
            <person name="McCorkle S."/>
            <person name="Dunn J."/>
            <person name="van der Lelie D."/>
            <person name="Mergeay M."/>
        </authorList>
    </citation>
    <scope>NUCLEOTIDE SEQUENCE [LARGE SCALE GENOMIC DNA]</scope>
    <source>
        <strain>ATCC 43123 / DSM 2839 / NBRC 102507 / CH34</strain>
    </source>
</reference>
<comment type="function">
    <text evidence="1">Cell wall formation.</text>
</comment>
<comment type="catalytic activity">
    <reaction evidence="1">
        <text>UDP-N-acetyl-alpha-D-muramate + L-alanine + ATP = UDP-N-acetyl-alpha-D-muramoyl-L-alanine + ADP + phosphate + H(+)</text>
        <dbReference type="Rhea" id="RHEA:23372"/>
        <dbReference type="ChEBI" id="CHEBI:15378"/>
        <dbReference type="ChEBI" id="CHEBI:30616"/>
        <dbReference type="ChEBI" id="CHEBI:43474"/>
        <dbReference type="ChEBI" id="CHEBI:57972"/>
        <dbReference type="ChEBI" id="CHEBI:70757"/>
        <dbReference type="ChEBI" id="CHEBI:83898"/>
        <dbReference type="ChEBI" id="CHEBI:456216"/>
        <dbReference type="EC" id="6.3.2.8"/>
    </reaction>
</comment>
<comment type="pathway">
    <text evidence="1">Cell wall biogenesis; peptidoglycan biosynthesis.</text>
</comment>
<comment type="subcellular location">
    <subcellularLocation>
        <location evidence="1">Cytoplasm</location>
    </subcellularLocation>
</comment>
<comment type="similarity">
    <text evidence="1">Belongs to the MurCDEF family.</text>
</comment>
<protein>
    <recommendedName>
        <fullName evidence="1">UDP-N-acetylmuramate--L-alanine ligase</fullName>
        <ecNumber evidence="1">6.3.2.8</ecNumber>
    </recommendedName>
    <alternativeName>
        <fullName evidence="1">UDP-N-acetylmuramoyl-L-alanine synthetase</fullName>
    </alternativeName>
</protein>
<evidence type="ECO:0000255" key="1">
    <source>
        <dbReference type="HAMAP-Rule" id="MF_00046"/>
    </source>
</evidence>
<gene>
    <name evidence="1" type="primary">murC</name>
    <name type="ordered locus">Rmet_3127</name>
</gene>
<keyword id="KW-0067">ATP-binding</keyword>
<keyword id="KW-0131">Cell cycle</keyword>
<keyword id="KW-0132">Cell division</keyword>
<keyword id="KW-0133">Cell shape</keyword>
<keyword id="KW-0961">Cell wall biogenesis/degradation</keyword>
<keyword id="KW-0963">Cytoplasm</keyword>
<keyword id="KW-0436">Ligase</keyword>
<keyword id="KW-0547">Nucleotide-binding</keyword>
<keyword id="KW-0573">Peptidoglycan synthesis</keyword>
<keyword id="KW-1185">Reference proteome</keyword>
<dbReference type="EC" id="6.3.2.8" evidence="1"/>
<dbReference type="EMBL" id="CP000352">
    <property type="protein sequence ID" value="ABF09999.1"/>
    <property type="molecule type" value="Genomic_DNA"/>
</dbReference>
<dbReference type="RefSeq" id="WP_011517619.1">
    <property type="nucleotide sequence ID" value="NC_007973.1"/>
</dbReference>
<dbReference type="SMR" id="Q1LIM7"/>
<dbReference type="STRING" id="266264.Rmet_3127"/>
<dbReference type="GeneID" id="60820497"/>
<dbReference type="KEGG" id="rme:Rmet_3127"/>
<dbReference type="eggNOG" id="COG0773">
    <property type="taxonomic scope" value="Bacteria"/>
</dbReference>
<dbReference type="HOGENOM" id="CLU_028104_2_2_4"/>
<dbReference type="UniPathway" id="UPA00219"/>
<dbReference type="Proteomes" id="UP000002429">
    <property type="component" value="Chromosome"/>
</dbReference>
<dbReference type="GO" id="GO:0005737">
    <property type="term" value="C:cytoplasm"/>
    <property type="evidence" value="ECO:0007669"/>
    <property type="project" value="UniProtKB-SubCell"/>
</dbReference>
<dbReference type="GO" id="GO:0005524">
    <property type="term" value="F:ATP binding"/>
    <property type="evidence" value="ECO:0007669"/>
    <property type="project" value="UniProtKB-UniRule"/>
</dbReference>
<dbReference type="GO" id="GO:0008763">
    <property type="term" value="F:UDP-N-acetylmuramate-L-alanine ligase activity"/>
    <property type="evidence" value="ECO:0007669"/>
    <property type="project" value="UniProtKB-UniRule"/>
</dbReference>
<dbReference type="GO" id="GO:0051301">
    <property type="term" value="P:cell division"/>
    <property type="evidence" value="ECO:0007669"/>
    <property type="project" value="UniProtKB-KW"/>
</dbReference>
<dbReference type="GO" id="GO:0071555">
    <property type="term" value="P:cell wall organization"/>
    <property type="evidence" value="ECO:0007669"/>
    <property type="project" value="UniProtKB-KW"/>
</dbReference>
<dbReference type="GO" id="GO:0009252">
    <property type="term" value="P:peptidoglycan biosynthetic process"/>
    <property type="evidence" value="ECO:0007669"/>
    <property type="project" value="UniProtKB-UniRule"/>
</dbReference>
<dbReference type="GO" id="GO:0008360">
    <property type="term" value="P:regulation of cell shape"/>
    <property type="evidence" value="ECO:0007669"/>
    <property type="project" value="UniProtKB-KW"/>
</dbReference>
<dbReference type="FunFam" id="3.40.1190.10:FF:000001">
    <property type="entry name" value="UDP-N-acetylmuramate--L-alanine ligase"/>
    <property type="match status" value="1"/>
</dbReference>
<dbReference type="Gene3D" id="3.90.190.20">
    <property type="entry name" value="Mur ligase, C-terminal domain"/>
    <property type="match status" value="1"/>
</dbReference>
<dbReference type="Gene3D" id="3.40.1190.10">
    <property type="entry name" value="Mur-like, catalytic domain"/>
    <property type="match status" value="1"/>
</dbReference>
<dbReference type="Gene3D" id="3.40.50.720">
    <property type="entry name" value="NAD(P)-binding Rossmann-like Domain"/>
    <property type="match status" value="1"/>
</dbReference>
<dbReference type="HAMAP" id="MF_00046">
    <property type="entry name" value="MurC"/>
    <property type="match status" value="1"/>
</dbReference>
<dbReference type="InterPro" id="IPR036565">
    <property type="entry name" value="Mur-like_cat_sf"/>
</dbReference>
<dbReference type="InterPro" id="IPR004101">
    <property type="entry name" value="Mur_ligase_C"/>
</dbReference>
<dbReference type="InterPro" id="IPR036615">
    <property type="entry name" value="Mur_ligase_C_dom_sf"/>
</dbReference>
<dbReference type="InterPro" id="IPR013221">
    <property type="entry name" value="Mur_ligase_cen"/>
</dbReference>
<dbReference type="InterPro" id="IPR000713">
    <property type="entry name" value="Mur_ligase_N"/>
</dbReference>
<dbReference type="InterPro" id="IPR050061">
    <property type="entry name" value="MurCDEF_pg_biosynth"/>
</dbReference>
<dbReference type="InterPro" id="IPR005758">
    <property type="entry name" value="UDP-N-AcMur_Ala_ligase_MurC"/>
</dbReference>
<dbReference type="NCBIfam" id="TIGR01082">
    <property type="entry name" value="murC"/>
    <property type="match status" value="1"/>
</dbReference>
<dbReference type="PANTHER" id="PTHR43445:SF3">
    <property type="entry name" value="UDP-N-ACETYLMURAMATE--L-ALANINE LIGASE"/>
    <property type="match status" value="1"/>
</dbReference>
<dbReference type="PANTHER" id="PTHR43445">
    <property type="entry name" value="UDP-N-ACETYLMURAMATE--L-ALANINE LIGASE-RELATED"/>
    <property type="match status" value="1"/>
</dbReference>
<dbReference type="Pfam" id="PF01225">
    <property type="entry name" value="Mur_ligase"/>
    <property type="match status" value="1"/>
</dbReference>
<dbReference type="Pfam" id="PF02875">
    <property type="entry name" value="Mur_ligase_C"/>
    <property type="match status" value="1"/>
</dbReference>
<dbReference type="Pfam" id="PF08245">
    <property type="entry name" value="Mur_ligase_M"/>
    <property type="match status" value="1"/>
</dbReference>
<dbReference type="SUPFAM" id="SSF51984">
    <property type="entry name" value="MurCD N-terminal domain"/>
    <property type="match status" value="1"/>
</dbReference>
<dbReference type="SUPFAM" id="SSF53623">
    <property type="entry name" value="MurD-like peptide ligases, catalytic domain"/>
    <property type="match status" value="1"/>
</dbReference>
<dbReference type="SUPFAM" id="SSF53244">
    <property type="entry name" value="MurD-like peptide ligases, peptide-binding domain"/>
    <property type="match status" value="1"/>
</dbReference>
<organism>
    <name type="scientific">Cupriavidus metallidurans (strain ATCC 43123 / DSM 2839 / NBRC 102507 / CH34)</name>
    <name type="common">Ralstonia metallidurans</name>
    <dbReference type="NCBI Taxonomy" id="266264"/>
    <lineage>
        <taxon>Bacteria</taxon>
        <taxon>Pseudomonadati</taxon>
        <taxon>Pseudomonadota</taxon>
        <taxon>Betaproteobacteria</taxon>
        <taxon>Burkholderiales</taxon>
        <taxon>Burkholderiaceae</taxon>
        <taxon>Cupriavidus</taxon>
    </lineage>
</organism>
<sequence>MKHIVKNIHFVGIGGAGMSGIAEVLLNLGYKVSGSDVGSNAATRRLASLGARVAHGHDAENVTGANAVVVSTAVTNDNPEVLAARARRIPVVPRAVMLAELMRLKQGVAIAGTHGKTTTTSLVASVLAEGGLDPTFVIGGRLNSAGANARLGTGDFIVAEADESDASFLNLFPVMEVITNIDADHMDTYGHDFARLKQAFVEFTQRLPFYGIAVLCVDDPNVREILPFVSKPVVRYGFAEDAQIRAVNARAVDGQMHFTVLRQLNGHAEPPLDIVLNLPGIHNVQNALAAIAIATELEVPDASIVKALREFHGVGRRFQRYGEVATPDGSGTFTLVDDYGHHPVEMAATLAAARGAFPDRRLVLAFQPHRFTRTRDCFEDFVKVLGTVDALLLAEVYAAGESPIVAADGRALTRALRVANKVEPVFVEQIEDMPQAILNAVRPGDVVVTMGAGSIGAVPGQLVSHQQGGQQ</sequence>
<feature type="chain" id="PRO_1000004391" description="UDP-N-acetylmuramate--L-alanine ligase">
    <location>
        <begin position="1"/>
        <end position="471"/>
    </location>
</feature>
<feature type="binding site" evidence="1">
    <location>
        <begin position="112"/>
        <end position="118"/>
    </location>
    <ligand>
        <name>ATP</name>
        <dbReference type="ChEBI" id="CHEBI:30616"/>
    </ligand>
</feature>
<proteinExistence type="inferred from homology"/>
<accession>Q1LIM7</accession>
<name>MURC_CUPMC</name>